<reference key="1">
    <citation type="submission" date="2006-07" db="EMBL/GenBank/DDBJ databases">
        <authorList>
            <person name="Cheng J.-F."/>
            <person name="Hamilton M."/>
            <person name="Peng Y."/>
            <person name="Hosseini R."/>
            <person name="Peng Z."/>
            <person name="Malinov I."/>
            <person name="Rubin E.M."/>
        </authorList>
    </citation>
    <scope>NUCLEOTIDE SEQUENCE [LARGE SCALE GENOMIC DNA]</scope>
</reference>
<reference key="2">
    <citation type="unpublished observations" date="2012-11">
        <authorList>
            <person name="Puppione D.L."/>
        </authorList>
    </citation>
    <scope>IDENTIFICATION</scope>
</reference>
<protein>
    <recommendedName>
        <fullName>Apolipoprotein C-II</fullName>
        <shortName>Apo-CII</shortName>
        <shortName>ApoC-II</shortName>
    </recommendedName>
    <alternativeName>
        <fullName>Apolipoprotein C2</fullName>
    </alternativeName>
    <component>
        <recommendedName>
            <fullName>Proapolipoprotein C-II</fullName>
            <shortName>ProapoC-II</shortName>
        </recommendedName>
    </component>
</protein>
<keyword id="KW-0162">Chylomicron</keyword>
<keyword id="KW-0325">Glycoprotein</keyword>
<keyword id="KW-0345">HDL</keyword>
<keyword id="KW-0427">LDL</keyword>
<keyword id="KW-0442">Lipid degradation</keyword>
<keyword id="KW-0443">Lipid metabolism</keyword>
<keyword id="KW-0445">Lipid transport</keyword>
<keyword id="KW-1185">Reference proteome</keyword>
<keyword id="KW-0964">Secreted</keyword>
<keyword id="KW-0730">Sialic acid</keyword>
<keyword id="KW-0732">Signal</keyword>
<keyword id="KW-0813">Transport</keyword>
<keyword id="KW-0850">VLDL</keyword>
<proteinExistence type="inferred from homology"/>
<accession>P0DKW0</accession>
<dbReference type="EMBL" id="AC151887">
    <property type="status" value="NOT_ANNOTATED_CDS"/>
    <property type="molecule type" value="Genomic_DNA"/>
</dbReference>
<dbReference type="RefSeq" id="XP_039321333.1">
    <property type="nucleotide sequence ID" value="XM_039465399.1"/>
</dbReference>
<dbReference type="SMR" id="P0DKW0"/>
<dbReference type="STRING" id="39432.ENSSBOP00000036647"/>
<dbReference type="GeneID" id="101044141"/>
<dbReference type="Proteomes" id="UP000233220">
    <property type="component" value="Whole Genome Shotgun Assembly"/>
</dbReference>
<dbReference type="GO" id="GO:0042627">
    <property type="term" value="C:chylomicron"/>
    <property type="evidence" value="ECO:0007669"/>
    <property type="project" value="UniProtKB-KW"/>
</dbReference>
<dbReference type="GO" id="GO:0034364">
    <property type="term" value="C:high-density lipoprotein particle"/>
    <property type="evidence" value="ECO:0007669"/>
    <property type="project" value="UniProtKB-KW"/>
</dbReference>
<dbReference type="GO" id="GO:0034362">
    <property type="term" value="C:low-density lipoprotein particle"/>
    <property type="evidence" value="ECO:0007669"/>
    <property type="project" value="UniProtKB-KW"/>
</dbReference>
<dbReference type="GO" id="GO:0034361">
    <property type="term" value="C:very-low-density lipoprotein particle"/>
    <property type="evidence" value="ECO:0007669"/>
    <property type="project" value="UniProtKB-KW"/>
</dbReference>
<dbReference type="GO" id="GO:0016004">
    <property type="term" value="F:phospholipase activator activity"/>
    <property type="evidence" value="ECO:0007669"/>
    <property type="project" value="TreeGrafter"/>
</dbReference>
<dbReference type="GO" id="GO:0043274">
    <property type="term" value="F:phospholipase binding"/>
    <property type="evidence" value="ECO:0007669"/>
    <property type="project" value="TreeGrafter"/>
</dbReference>
<dbReference type="GO" id="GO:0016042">
    <property type="term" value="P:lipid catabolic process"/>
    <property type="evidence" value="ECO:0007669"/>
    <property type="project" value="UniProtKB-KW"/>
</dbReference>
<dbReference type="GO" id="GO:0006869">
    <property type="term" value="P:lipid transport"/>
    <property type="evidence" value="ECO:0007669"/>
    <property type="project" value="UniProtKB-KW"/>
</dbReference>
<dbReference type="GO" id="GO:0060697">
    <property type="term" value="P:positive regulation of phospholipid catabolic process"/>
    <property type="evidence" value="ECO:0007669"/>
    <property type="project" value="TreeGrafter"/>
</dbReference>
<dbReference type="FunFam" id="1.10.1440.10:FF:000001">
    <property type="entry name" value="Apolipoprotein C-II"/>
    <property type="match status" value="1"/>
</dbReference>
<dbReference type="Gene3D" id="1.10.1440.10">
    <property type="entry name" value="Apolipoprotein C-II"/>
    <property type="match status" value="1"/>
</dbReference>
<dbReference type="InterPro" id="IPR008019">
    <property type="entry name" value="Apo-CII"/>
</dbReference>
<dbReference type="InterPro" id="IPR023121">
    <property type="entry name" value="ApoC-II_dom_sf"/>
</dbReference>
<dbReference type="PANTHER" id="PTHR16566">
    <property type="entry name" value="APOLIPOPROTEIN C-II"/>
    <property type="match status" value="1"/>
</dbReference>
<dbReference type="PANTHER" id="PTHR16566:SF0">
    <property type="entry name" value="APOLIPOPROTEIN C-II"/>
    <property type="match status" value="1"/>
</dbReference>
<dbReference type="Pfam" id="PF05355">
    <property type="entry name" value="Apo-CII"/>
    <property type="match status" value="1"/>
</dbReference>
<evidence type="ECO:0000250" key="1">
    <source>
        <dbReference type="UniProtKB" id="P02655"/>
    </source>
</evidence>
<evidence type="ECO:0000255" key="2"/>
<evidence type="ECO:0000305" key="3"/>
<comment type="function">
    <text evidence="1">Component of chylomicrons, very low-density lipoproteins (VLDL), low-density lipoproteins (LDL), and high-density lipoproteins (HDL) in plasma. Plays an important role in lipoprotein metabolism as an activator of lipoprotein lipase. Both proapolipoprotein C-II and apolipoprotein C-II can activate lipoprotein lipase.</text>
</comment>
<comment type="subcellular location">
    <subcellularLocation>
        <location evidence="1">Secreted</location>
    </subcellularLocation>
</comment>
<comment type="PTM">
    <text evidence="1">Proapolipoprotein C-II is synthesized as a sialic acid containing glycoprotein which is subsequently desialylated prior to its proteolytic processing.</text>
</comment>
<comment type="PTM">
    <text evidence="1">Proapolipoprotein C-II, the major form found in plasma undergoes proteolytic cleavage of its N-terminal hexapeptide to generate apolipoprotein C-II, which occurs as the minor form in plasma.</text>
</comment>
<comment type="similarity">
    <text evidence="3">Belongs to the apolipoprotein C2 family.</text>
</comment>
<feature type="signal peptide" evidence="2">
    <location>
        <begin position="1"/>
        <end position="22"/>
    </location>
</feature>
<feature type="chain" id="PRO_0000420987" description="Proapolipoprotein C-II">
    <location>
        <begin position="23"/>
        <end position="101"/>
    </location>
</feature>
<feature type="chain" id="PRO_0000430843" description="Apolipoprotein C-II" evidence="1">
    <location>
        <begin position="29"/>
        <end position="101"/>
    </location>
</feature>
<feature type="region of interest" description="Lipid binding" evidence="1">
    <location>
        <begin position="66"/>
        <end position="74"/>
    </location>
</feature>
<feature type="region of interest" description="Lipoprotein lipase cofactor" evidence="1">
    <location>
        <begin position="78"/>
        <end position="101"/>
    </location>
</feature>
<sequence length="101" mass="11041">MGTRFLLALFLVLLVLGFEVQGAPLPQQEESAGPALLTQMRESLSGYWDSAKAAASSLYQKTYLPAVDEKLRDMYSKSTAAVSTYAGIFTDQVLSMLRGEE</sequence>
<organism>
    <name type="scientific">Saimiri boliviensis boliviensis</name>
    <name type="common">Bolivian squirrel monkey</name>
    <dbReference type="NCBI Taxonomy" id="39432"/>
    <lineage>
        <taxon>Eukaryota</taxon>
        <taxon>Metazoa</taxon>
        <taxon>Chordata</taxon>
        <taxon>Craniata</taxon>
        <taxon>Vertebrata</taxon>
        <taxon>Euteleostomi</taxon>
        <taxon>Mammalia</taxon>
        <taxon>Eutheria</taxon>
        <taxon>Euarchontoglires</taxon>
        <taxon>Primates</taxon>
        <taxon>Haplorrhini</taxon>
        <taxon>Platyrrhini</taxon>
        <taxon>Cebidae</taxon>
        <taxon>Saimiriinae</taxon>
        <taxon>Saimiri</taxon>
    </lineage>
</organism>
<gene>
    <name type="primary">APOC2</name>
</gene>
<name>APOC2_SAIBB</name>